<organism>
    <name type="scientific">Bacillus subtilis (strain 168)</name>
    <dbReference type="NCBI Taxonomy" id="224308"/>
    <lineage>
        <taxon>Bacteria</taxon>
        <taxon>Bacillati</taxon>
        <taxon>Bacillota</taxon>
        <taxon>Bacilli</taxon>
        <taxon>Bacillales</taxon>
        <taxon>Bacillaceae</taxon>
        <taxon>Bacillus</taxon>
    </lineage>
</organism>
<name>KAPB_BACSU</name>
<keyword id="KW-1003">Cell membrane</keyword>
<keyword id="KW-0449">Lipoprotein</keyword>
<keyword id="KW-0472">Membrane</keyword>
<keyword id="KW-0564">Palmitate</keyword>
<keyword id="KW-1185">Reference proteome</keyword>
<keyword id="KW-0732">Signal</keyword>
<accession>Q08429</accession>
<reference key="1">
    <citation type="journal article" date="1993" name="Mol. Microbiol.">
        <title>Multisensory activation of the phosphorelay initiating sporulation in Bacillus subtilis: identification and sequence of the protein kinase of the alternate pathway.</title>
        <authorList>
            <person name="Trach K.A."/>
            <person name="Hoch J.A."/>
        </authorList>
    </citation>
    <scope>NUCLEOTIDE SEQUENCE [GENOMIC DNA]</scope>
    <source>
        <strain>168</strain>
    </source>
</reference>
<reference key="2">
    <citation type="journal article" date="1997" name="Microbiology">
        <title>Analysis of the Bacillus subtilis genome: cloning and nucleotide sequence of a 62 kb region between 275 degrees (rrnB) and 284 degrees (pai).</title>
        <authorList>
            <person name="Oudega B."/>
            <person name="Koningstein G."/>
            <person name="Rodrigues L."/>
            <person name="de Sales Ramon M."/>
            <person name="Hilbert H."/>
            <person name="Duesterhoeft A."/>
            <person name="Pohl T.M."/>
            <person name="Weitzenegger T."/>
        </authorList>
    </citation>
    <scope>NUCLEOTIDE SEQUENCE [GENOMIC DNA]</scope>
    <source>
        <strain>168</strain>
    </source>
</reference>
<reference key="3">
    <citation type="journal article" date="1997" name="Nature">
        <title>The complete genome sequence of the Gram-positive bacterium Bacillus subtilis.</title>
        <authorList>
            <person name="Kunst F."/>
            <person name="Ogasawara N."/>
            <person name="Moszer I."/>
            <person name="Albertini A.M."/>
            <person name="Alloni G."/>
            <person name="Azevedo V."/>
            <person name="Bertero M.G."/>
            <person name="Bessieres P."/>
            <person name="Bolotin A."/>
            <person name="Borchert S."/>
            <person name="Borriss R."/>
            <person name="Boursier L."/>
            <person name="Brans A."/>
            <person name="Braun M."/>
            <person name="Brignell S.C."/>
            <person name="Bron S."/>
            <person name="Brouillet S."/>
            <person name="Bruschi C.V."/>
            <person name="Caldwell B."/>
            <person name="Capuano V."/>
            <person name="Carter N.M."/>
            <person name="Choi S.-K."/>
            <person name="Codani J.-J."/>
            <person name="Connerton I.F."/>
            <person name="Cummings N.J."/>
            <person name="Daniel R.A."/>
            <person name="Denizot F."/>
            <person name="Devine K.M."/>
            <person name="Duesterhoeft A."/>
            <person name="Ehrlich S.D."/>
            <person name="Emmerson P.T."/>
            <person name="Entian K.-D."/>
            <person name="Errington J."/>
            <person name="Fabret C."/>
            <person name="Ferrari E."/>
            <person name="Foulger D."/>
            <person name="Fritz C."/>
            <person name="Fujita M."/>
            <person name="Fujita Y."/>
            <person name="Fuma S."/>
            <person name="Galizzi A."/>
            <person name="Galleron N."/>
            <person name="Ghim S.-Y."/>
            <person name="Glaser P."/>
            <person name="Goffeau A."/>
            <person name="Golightly E.J."/>
            <person name="Grandi G."/>
            <person name="Guiseppi G."/>
            <person name="Guy B.J."/>
            <person name="Haga K."/>
            <person name="Haiech J."/>
            <person name="Harwood C.R."/>
            <person name="Henaut A."/>
            <person name="Hilbert H."/>
            <person name="Holsappel S."/>
            <person name="Hosono S."/>
            <person name="Hullo M.-F."/>
            <person name="Itaya M."/>
            <person name="Jones L.-M."/>
            <person name="Joris B."/>
            <person name="Karamata D."/>
            <person name="Kasahara Y."/>
            <person name="Klaerr-Blanchard M."/>
            <person name="Klein C."/>
            <person name="Kobayashi Y."/>
            <person name="Koetter P."/>
            <person name="Koningstein G."/>
            <person name="Krogh S."/>
            <person name="Kumano M."/>
            <person name="Kurita K."/>
            <person name="Lapidus A."/>
            <person name="Lardinois S."/>
            <person name="Lauber J."/>
            <person name="Lazarevic V."/>
            <person name="Lee S.-M."/>
            <person name="Levine A."/>
            <person name="Liu H."/>
            <person name="Masuda S."/>
            <person name="Mauel C."/>
            <person name="Medigue C."/>
            <person name="Medina N."/>
            <person name="Mellado R.P."/>
            <person name="Mizuno M."/>
            <person name="Moestl D."/>
            <person name="Nakai S."/>
            <person name="Noback M."/>
            <person name="Noone D."/>
            <person name="O'Reilly M."/>
            <person name="Ogawa K."/>
            <person name="Ogiwara A."/>
            <person name="Oudega B."/>
            <person name="Park S.-H."/>
            <person name="Parro V."/>
            <person name="Pohl T.M."/>
            <person name="Portetelle D."/>
            <person name="Porwollik S."/>
            <person name="Prescott A.M."/>
            <person name="Presecan E."/>
            <person name="Pujic P."/>
            <person name="Purnelle B."/>
            <person name="Rapoport G."/>
            <person name="Rey M."/>
            <person name="Reynolds S."/>
            <person name="Rieger M."/>
            <person name="Rivolta C."/>
            <person name="Rocha E."/>
            <person name="Roche B."/>
            <person name="Rose M."/>
            <person name="Sadaie Y."/>
            <person name="Sato T."/>
            <person name="Scanlan E."/>
            <person name="Schleich S."/>
            <person name="Schroeter R."/>
            <person name="Scoffone F."/>
            <person name="Sekiguchi J."/>
            <person name="Sekowska A."/>
            <person name="Seror S.J."/>
            <person name="Serror P."/>
            <person name="Shin B.-S."/>
            <person name="Soldo B."/>
            <person name="Sorokin A."/>
            <person name="Tacconi E."/>
            <person name="Takagi T."/>
            <person name="Takahashi H."/>
            <person name="Takemaru K."/>
            <person name="Takeuchi M."/>
            <person name="Tamakoshi A."/>
            <person name="Tanaka T."/>
            <person name="Terpstra P."/>
            <person name="Tognoni A."/>
            <person name="Tosato V."/>
            <person name="Uchiyama S."/>
            <person name="Vandenbol M."/>
            <person name="Vannier F."/>
            <person name="Vassarotti A."/>
            <person name="Viari A."/>
            <person name="Wambutt R."/>
            <person name="Wedler E."/>
            <person name="Wedler H."/>
            <person name="Weitzenegger T."/>
            <person name="Winters P."/>
            <person name="Wipat A."/>
            <person name="Yamamoto H."/>
            <person name="Yamane K."/>
            <person name="Yasumoto K."/>
            <person name="Yata K."/>
            <person name="Yoshida K."/>
            <person name="Yoshikawa H.-F."/>
            <person name="Zumstein E."/>
            <person name="Yoshikawa H."/>
            <person name="Danchin A."/>
        </authorList>
    </citation>
    <scope>NUCLEOTIDE SEQUENCE [LARGE SCALE GENOMIC DNA]</scope>
    <source>
        <strain>168</strain>
    </source>
</reference>
<reference key="4">
    <citation type="journal article" date="1997" name="Mol. Microbiol.">
        <title>KapB is a lipoprotein required for KinB signal transduction and activation of the phosphorelay to sporulation in Bacillus subtilis.</title>
        <authorList>
            <person name="Dartois V."/>
            <person name="Djavakhishvili T."/>
            <person name="Hoch J.A."/>
        </authorList>
    </citation>
    <scope>CHARACTERIZATION</scope>
    <scope>DIACYLGLYCEROL AT CYS-26</scope>
    <scope>PALMITOYLATION AT CYS-26</scope>
    <source>
        <strain>168</strain>
    </source>
</reference>
<comment type="function">
    <text>May play a role in the activation or the expression of KinB.</text>
</comment>
<comment type="subcellular location">
    <subcellularLocation>
        <location>Cell membrane</location>
        <topology>Lipid-anchor</topology>
    </subcellularLocation>
</comment>
<feature type="signal peptide">
    <location>
        <begin position="1"/>
        <end position="25"/>
    </location>
</feature>
<feature type="chain" id="PRO_0000021540" description="Kinase-associated lipoprotein B">
    <location>
        <begin position="26"/>
        <end position="128"/>
    </location>
</feature>
<feature type="lipid moiety-binding region" description="N-palmitoyl cysteine" evidence="1">
    <location>
        <position position="26"/>
    </location>
</feature>
<feature type="lipid moiety-binding region" description="S-diacylglycerol cysteine" evidence="1">
    <location>
        <position position="26"/>
    </location>
</feature>
<proteinExistence type="evidence at protein level"/>
<gene>
    <name type="primary">kapB</name>
    <name type="ordered locus">BSU31460</name>
</gene>
<dbReference type="EMBL" id="Z93933">
    <property type="protein sequence ID" value="CAB07912.1"/>
    <property type="molecule type" value="Genomic_DNA"/>
</dbReference>
<dbReference type="EMBL" id="U63302">
    <property type="protein sequence ID" value="AAB61981.1"/>
    <property type="molecule type" value="Genomic_DNA"/>
</dbReference>
<dbReference type="EMBL" id="AL009126">
    <property type="protein sequence ID" value="CAB15135.1"/>
    <property type="molecule type" value="Genomic_DNA"/>
</dbReference>
<dbReference type="PIR" id="S32936">
    <property type="entry name" value="S32936"/>
</dbReference>
<dbReference type="RefSeq" id="NP_391024.1">
    <property type="nucleotide sequence ID" value="NC_000964.3"/>
</dbReference>
<dbReference type="RefSeq" id="WP_003228851.1">
    <property type="nucleotide sequence ID" value="NZ_OZ025638.1"/>
</dbReference>
<dbReference type="SMR" id="Q08429"/>
<dbReference type="FunCoup" id="Q08429">
    <property type="interactions" value="124"/>
</dbReference>
<dbReference type="STRING" id="224308.BSU31460"/>
<dbReference type="PaxDb" id="224308-BSU31460"/>
<dbReference type="EnsemblBacteria" id="CAB15135">
    <property type="protein sequence ID" value="CAB15135"/>
    <property type="gene ID" value="BSU_31460"/>
</dbReference>
<dbReference type="GeneID" id="938848"/>
<dbReference type="KEGG" id="bsu:BSU31460"/>
<dbReference type="PATRIC" id="fig|224308.179.peg.3410"/>
<dbReference type="eggNOG" id="ENOG5032UIM">
    <property type="taxonomic scope" value="Bacteria"/>
</dbReference>
<dbReference type="InParanoid" id="Q08429"/>
<dbReference type="OrthoDB" id="2407789at2"/>
<dbReference type="PhylomeDB" id="Q08429"/>
<dbReference type="BioCyc" id="BSUB:BSU31460-MONOMER"/>
<dbReference type="Proteomes" id="UP000001570">
    <property type="component" value="Chromosome"/>
</dbReference>
<dbReference type="GO" id="GO:0005886">
    <property type="term" value="C:plasma membrane"/>
    <property type="evidence" value="ECO:0007669"/>
    <property type="project" value="UniProtKB-SubCell"/>
</dbReference>
<dbReference type="Gene3D" id="2.30.30.430">
    <property type="entry name" value="Kinase associated protein B domain"/>
    <property type="match status" value="1"/>
</dbReference>
<dbReference type="InterPro" id="IPR014916">
    <property type="entry name" value="KapB"/>
</dbReference>
<dbReference type="InterPro" id="IPR038080">
    <property type="entry name" value="KapB_sf"/>
</dbReference>
<dbReference type="Pfam" id="PF08810">
    <property type="entry name" value="KapB"/>
    <property type="match status" value="1"/>
</dbReference>
<dbReference type="SMART" id="SM01298">
    <property type="entry name" value="KapB"/>
    <property type="match status" value="1"/>
</dbReference>
<dbReference type="SUPFAM" id="SSF141251">
    <property type="entry name" value="Kinase-associated protein B-like"/>
    <property type="match status" value="1"/>
</dbReference>
<evidence type="ECO:0000305" key="1">
    <source>
    </source>
</evidence>
<protein>
    <recommendedName>
        <fullName>Kinase-associated lipoprotein B</fullName>
    </recommendedName>
</protein>
<sequence>MSTFETGSIVKGFYKTGVYIGEITACRPQHYLVKVKAVLTHPAQGDLHHPKQADVPFFHERKALAYGEQTNIPHHMVKPYDGEVPDYTESLREATAQMRAKLNEDGSEWAKRSLHNLDILEKEYFNRP</sequence>